<comment type="function">
    <text evidence="2">Probable transcription factor. Involved in kidney development, acting synergistically with lhx1/lim-1 to establish the pronephric primordium in late gastrulae/early neurulae (By similarity).</text>
</comment>
<comment type="subcellular location">
    <subcellularLocation>
        <location evidence="1 3">Nucleus</location>
    </subcellularLocation>
</comment>
<comment type="sequence caution" evidence="5">
    <conflict type="erroneous initiation">
        <sequence resource="EMBL-CDS" id="AAI25806"/>
    </conflict>
</comment>
<sequence>ELITERGCSGPASNLNIGHGGLNQLGGAFVNGRPLPEVVRQRIVDLAHQGVRPCDISRQLRVSHGCVSKILGRYYETGSIRPGVIGGSKPKVATPKVVEKIGDYKRQNPTMFAWEIRDRLLAEGVCDNDTVPSVSSINRIIRTKVQQLFNLPMESCVKSLSPGQTLIPSSAVTPPESPHSDSLGSTYSISGLLGITQPGADGKRKLDDSDQESCRLSIDSQGSMGISRKQLRTEAYGHHPLDALECHFQRQHFPESYSSSTHSKTEQALYTLPLLNNAMDDGKSSLTSTNTTIGRNLSTHQGYSALSELSAFTIKQEASDSSSASSTPSSLCSPTFLDLQPISSGCSAPSFSAFSHPASVYGQFTSHMASGRDVVGSTLPGYPPHIPSGQGNYASSAIAGMVAAGGDYSGNAYSHGAYAAYGESWRFPSSSLLGSPYYYSSATRTAPPPTTAGAYDLL</sequence>
<evidence type="ECO:0000250" key="1">
    <source>
        <dbReference type="UniProtKB" id="Q06710"/>
    </source>
</evidence>
<evidence type="ECO:0000250" key="2">
    <source>
        <dbReference type="UniProtKB" id="Q9PUK5"/>
    </source>
</evidence>
<evidence type="ECO:0000255" key="3">
    <source>
        <dbReference type="PROSITE-ProRule" id="PRU00381"/>
    </source>
</evidence>
<evidence type="ECO:0000256" key="4">
    <source>
        <dbReference type="SAM" id="MobiDB-lite"/>
    </source>
</evidence>
<evidence type="ECO:0000305" key="5"/>
<evidence type="ECO:0000312" key="6">
    <source>
        <dbReference type="EMBL" id="AAI25806.1"/>
    </source>
</evidence>
<feature type="chain" id="PRO_0000284704" description="Paired box protein Pax-8">
    <location>
        <begin position="1" status="less than"/>
        <end position="458"/>
    </location>
</feature>
<feature type="DNA-binding region" description="Paired" evidence="3">
    <location>
        <begin position="18"/>
        <end position="144"/>
    </location>
</feature>
<feature type="region of interest" description="PAI subdomain" evidence="3">
    <location>
        <begin position="21"/>
        <end position="77"/>
    </location>
</feature>
<feature type="region of interest" description="RED subdomain" evidence="3">
    <location>
        <begin position="96"/>
        <end position="144"/>
    </location>
</feature>
<feature type="region of interest" description="Disordered" evidence="4">
    <location>
        <begin position="198"/>
        <end position="217"/>
    </location>
</feature>
<feature type="non-terminal residue" evidence="5">
    <location>
        <position position="1"/>
    </location>
</feature>
<keyword id="KW-0217">Developmental protein</keyword>
<keyword id="KW-0238">DNA-binding</keyword>
<keyword id="KW-0539">Nucleus</keyword>
<keyword id="KW-0563">Paired box</keyword>
<keyword id="KW-1185">Reference proteome</keyword>
<keyword id="KW-0709">Segmentation polarity protein</keyword>
<keyword id="KW-0804">Transcription</keyword>
<keyword id="KW-0805">Transcription regulation</keyword>
<organism>
    <name type="scientific">Xenopus tropicalis</name>
    <name type="common">Western clawed frog</name>
    <name type="synonym">Silurana tropicalis</name>
    <dbReference type="NCBI Taxonomy" id="8364"/>
    <lineage>
        <taxon>Eukaryota</taxon>
        <taxon>Metazoa</taxon>
        <taxon>Chordata</taxon>
        <taxon>Craniata</taxon>
        <taxon>Vertebrata</taxon>
        <taxon>Euteleostomi</taxon>
        <taxon>Amphibia</taxon>
        <taxon>Batrachia</taxon>
        <taxon>Anura</taxon>
        <taxon>Pipoidea</taxon>
        <taxon>Pipidae</taxon>
        <taxon>Xenopodinae</taxon>
        <taxon>Xenopus</taxon>
        <taxon>Silurana</taxon>
    </lineage>
</organism>
<gene>
    <name evidence="1" type="primary">pax8</name>
</gene>
<reference evidence="6" key="1">
    <citation type="submission" date="2006-10" db="EMBL/GenBank/DDBJ databases">
        <authorList>
            <consortium name="NIH - Xenopus Gene Collection (XGC) project"/>
        </authorList>
    </citation>
    <scope>NUCLEOTIDE SEQUENCE [LARGE SCALE MRNA]</scope>
    <source>
        <strain evidence="6">N6</strain>
        <tissue evidence="6">Oviduct</tissue>
    </source>
</reference>
<accession>A0JMA6</accession>
<proteinExistence type="evidence at transcript level"/>
<name>PAX8_XENTR</name>
<dbReference type="EMBL" id="BC125805">
    <property type="protein sequence ID" value="AAI25806.1"/>
    <property type="status" value="ALT_INIT"/>
    <property type="molecule type" value="mRNA"/>
</dbReference>
<dbReference type="RefSeq" id="NP_001072769.2">
    <property type="nucleotide sequence ID" value="NM_001079301.2"/>
</dbReference>
<dbReference type="SMR" id="A0JMA6"/>
<dbReference type="FunCoup" id="A0JMA6">
    <property type="interactions" value="1067"/>
</dbReference>
<dbReference type="STRING" id="8364.ENSXETP00000052275"/>
<dbReference type="PaxDb" id="8364-ENSXETP00000002730"/>
<dbReference type="DNASU" id="780226"/>
<dbReference type="GeneID" id="780226"/>
<dbReference type="KEGG" id="xtr:780226"/>
<dbReference type="CTD" id="7849"/>
<dbReference type="eggNOG" id="KOG3862">
    <property type="taxonomic scope" value="Eukaryota"/>
</dbReference>
<dbReference type="HOGENOM" id="CLU_019281_4_0_1"/>
<dbReference type="InParanoid" id="A0JMA6"/>
<dbReference type="OrthoDB" id="3225452at2759"/>
<dbReference type="Proteomes" id="UP000008143">
    <property type="component" value="Chromosome 3"/>
</dbReference>
<dbReference type="GO" id="GO:0005654">
    <property type="term" value="C:nucleoplasm"/>
    <property type="evidence" value="ECO:0000250"/>
    <property type="project" value="UniProtKB"/>
</dbReference>
<dbReference type="GO" id="GO:0000976">
    <property type="term" value="F:transcription cis-regulatory region binding"/>
    <property type="evidence" value="ECO:0000250"/>
    <property type="project" value="UniProtKB"/>
</dbReference>
<dbReference type="GO" id="GO:1900218">
    <property type="term" value="P:negative regulation of apoptotic process involved in metanephric nephron tubule development"/>
    <property type="evidence" value="ECO:0000250"/>
    <property type="project" value="UniProtKB"/>
</dbReference>
<dbReference type="GO" id="GO:1900212">
    <property type="term" value="P:negative regulation of mesenchymal cell apoptotic process involved in metanephros development"/>
    <property type="evidence" value="ECO:0000250"/>
    <property type="project" value="UniProtKB"/>
</dbReference>
<dbReference type="GO" id="GO:0045893">
    <property type="term" value="P:positive regulation of DNA-templated transcription"/>
    <property type="evidence" value="ECO:0000250"/>
    <property type="project" value="UniProtKB"/>
</dbReference>
<dbReference type="GO" id="GO:2000611">
    <property type="term" value="P:positive regulation of thyroid hormone generation"/>
    <property type="evidence" value="ECO:0000250"/>
    <property type="project" value="UniProtKB"/>
</dbReference>
<dbReference type="GO" id="GO:0039003">
    <property type="term" value="P:pronephric field specification"/>
    <property type="evidence" value="ECO:0000250"/>
    <property type="project" value="UniProtKB"/>
</dbReference>
<dbReference type="GO" id="GO:0039020">
    <property type="term" value="P:pronephric nephron tubule development"/>
    <property type="evidence" value="ECO:0000250"/>
    <property type="project" value="UniProtKB"/>
</dbReference>
<dbReference type="GO" id="GO:0048793">
    <property type="term" value="P:pronephros development"/>
    <property type="evidence" value="ECO:0000250"/>
    <property type="project" value="UniProtKB"/>
</dbReference>
<dbReference type="GO" id="GO:0042981">
    <property type="term" value="P:regulation of apoptotic process"/>
    <property type="evidence" value="ECO:0000250"/>
    <property type="project" value="UniProtKB"/>
</dbReference>
<dbReference type="GO" id="GO:0007367">
    <property type="term" value="P:segment polarity determination"/>
    <property type="evidence" value="ECO:0007669"/>
    <property type="project" value="UniProtKB-KW"/>
</dbReference>
<dbReference type="GO" id="GO:0001655">
    <property type="term" value="P:urogenital system development"/>
    <property type="evidence" value="ECO:0000250"/>
    <property type="project" value="UniProtKB"/>
</dbReference>
<dbReference type="CDD" id="cd00131">
    <property type="entry name" value="PAX"/>
    <property type="match status" value="1"/>
</dbReference>
<dbReference type="FunFam" id="1.10.10.10:FF:000013">
    <property type="entry name" value="Paired box 8 isoform 1"/>
    <property type="match status" value="1"/>
</dbReference>
<dbReference type="FunFam" id="1.10.10.10:FF:000003">
    <property type="entry name" value="Paired box protein Pax-6"/>
    <property type="match status" value="1"/>
</dbReference>
<dbReference type="Gene3D" id="1.10.10.10">
    <property type="entry name" value="Winged helix-like DNA-binding domain superfamily/Winged helix DNA-binding domain"/>
    <property type="match status" value="2"/>
</dbReference>
<dbReference type="InterPro" id="IPR009057">
    <property type="entry name" value="Homeodomain-like_sf"/>
</dbReference>
<dbReference type="InterPro" id="IPR043182">
    <property type="entry name" value="PAIRED_DNA-bd_dom"/>
</dbReference>
<dbReference type="InterPro" id="IPR001523">
    <property type="entry name" value="Paired_dom"/>
</dbReference>
<dbReference type="InterPro" id="IPR022130">
    <property type="entry name" value="Pax2_C"/>
</dbReference>
<dbReference type="InterPro" id="IPR043565">
    <property type="entry name" value="PAX_fam"/>
</dbReference>
<dbReference type="InterPro" id="IPR036388">
    <property type="entry name" value="WH-like_DNA-bd_sf"/>
</dbReference>
<dbReference type="PANTHER" id="PTHR45636">
    <property type="entry name" value="PAIRED BOX PROTEIN PAX-6-RELATED-RELATED"/>
    <property type="match status" value="1"/>
</dbReference>
<dbReference type="PANTHER" id="PTHR45636:SF6">
    <property type="entry name" value="PAIRED BOX PROTEIN PAX-8"/>
    <property type="match status" value="1"/>
</dbReference>
<dbReference type="Pfam" id="PF00292">
    <property type="entry name" value="PAX"/>
    <property type="match status" value="1"/>
</dbReference>
<dbReference type="Pfam" id="PF12403">
    <property type="entry name" value="Pax2_C"/>
    <property type="match status" value="1"/>
</dbReference>
<dbReference type="PRINTS" id="PR00027">
    <property type="entry name" value="PAIREDBOX"/>
</dbReference>
<dbReference type="SMART" id="SM00351">
    <property type="entry name" value="PAX"/>
    <property type="match status" value="1"/>
</dbReference>
<dbReference type="SUPFAM" id="SSF46689">
    <property type="entry name" value="Homeodomain-like"/>
    <property type="match status" value="1"/>
</dbReference>
<dbReference type="PROSITE" id="PS00034">
    <property type="entry name" value="PAIRED_1"/>
    <property type="match status" value="1"/>
</dbReference>
<dbReference type="PROSITE" id="PS51057">
    <property type="entry name" value="PAIRED_2"/>
    <property type="match status" value="1"/>
</dbReference>
<protein>
    <recommendedName>
        <fullName>Paired box protein Pax-8</fullName>
    </recommendedName>
</protein>